<keyword id="KW-0472">Membrane</keyword>
<keyword id="KW-0496">Mitochondrion</keyword>
<keyword id="KW-0999">Mitochondrion inner membrane</keyword>
<keyword id="KW-0597">Phosphoprotein</keyword>
<keyword id="KW-1185">Reference proteome</keyword>
<keyword id="KW-0749">Sporulation</keyword>
<keyword id="KW-0809">Transit peptide</keyword>
<gene>
    <name type="primary">RMD9</name>
    <name type="ordered locus">AFL029W</name>
</gene>
<feature type="transit peptide" description="Mitochondrion" evidence="2">
    <location>
        <begin position="1"/>
        <end position="12"/>
    </location>
</feature>
<feature type="chain" id="PRO_0000301781" description="RNA-binding protein RMD9, mitochondrial">
    <location>
        <begin position="13"/>
        <end position="667"/>
    </location>
</feature>
<comment type="function">
    <text evidence="1">Binds the 3'-UTR of mitochondrial mRNAs. Involved in the processing or stability of mitochondrial mRNAs.</text>
</comment>
<comment type="subunit">
    <text evidence="1">Monomer.</text>
</comment>
<comment type="subcellular location">
    <subcellularLocation>
        <location evidence="1">Mitochondrion inner membrane</location>
        <topology evidence="1">Peripheral membrane protein</topology>
        <orientation evidence="1">Matrix side</orientation>
    </subcellularLocation>
</comment>
<comment type="PTM">
    <text evidence="1">Phosphorylated. Phosphorylation promotes binding to RNA.</text>
</comment>
<comment type="similarity">
    <text evidence="3">Belongs to the RMD9 family.</text>
</comment>
<organism>
    <name type="scientific">Eremothecium gossypii (strain ATCC 10895 / CBS 109.51 / FGSC 9923 / NRRL Y-1056)</name>
    <name type="common">Yeast</name>
    <name type="synonym">Ashbya gossypii</name>
    <dbReference type="NCBI Taxonomy" id="284811"/>
    <lineage>
        <taxon>Eukaryota</taxon>
        <taxon>Fungi</taxon>
        <taxon>Dikarya</taxon>
        <taxon>Ascomycota</taxon>
        <taxon>Saccharomycotina</taxon>
        <taxon>Saccharomycetes</taxon>
        <taxon>Saccharomycetales</taxon>
        <taxon>Saccharomycetaceae</taxon>
        <taxon>Eremothecium</taxon>
    </lineage>
</organism>
<proteinExistence type="inferred from homology"/>
<accession>Q754V0</accession>
<reference key="1">
    <citation type="journal article" date="2004" name="Science">
        <title>The Ashbya gossypii genome as a tool for mapping the ancient Saccharomyces cerevisiae genome.</title>
        <authorList>
            <person name="Dietrich F.S."/>
            <person name="Voegeli S."/>
            <person name="Brachat S."/>
            <person name="Lerch A."/>
            <person name="Gates K."/>
            <person name="Steiner S."/>
            <person name="Mohr C."/>
            <person name="Poehlmann R."/>
            <person name="Luedi P."/>
            <person name="Choi S."/>
            <person name="Wing R.A."/>
            <person name="Flavier A."/>
            <person name="Gaffney T.D."/>
            <person name="Philippsen P."/>
        </authorList>
    </citation>
    <scope>NUCLEOTIDE SEQUENCE [LARGE SCALE GENOMIC DNA]</scope>
    <source>
        <strain>ATCC 10895 / CBS 109.51 / FGSC 9923 / NRRL Y-1056</strain>
    </source>
</reference>
<reference key="2">
    <citation type="journal article" date="2013" name="G3 (Bethesda)">
        <title>Genomes of Ashbya fungi isolated from insects reveal four mating-type loci, numerous translocations, lack of transposons, and distinct gene duplications.</title>
        <authorList>
            <person name="Dietrich F.S."/>
            <person name="Voegeli S."/>
            <person name="Kuo S."/>
            <person name="Philippsen P."/>
        </authorList>
    </citation>
    <scope>GENOME REANNOTATION</scope>
    <source>
        <strain>ATCC 10895 / CBS 109.51 / FGSC 9923 / NRRL Y-1056</strain>
    </source>
</reference>
<dbReference type="EMBL" id="AE016819">
    <property type="protein sequence ID" value="AAS53343.1"/>
    <property type="molecule type" value="Genomic_DNA"/>
</dbReference>
<dbReference type="RefSeq" id="NP_985519.1">
    <property type="nucleotide sequence ID" value="NM_210873.1"/>
</dbReference>
<dbReference type="SMR" id="Q754V0"/>
<dbReference type="FunCoup" id="Q754V0">
    <property type="interactions" value="83"/>
</dbReference>
<dbReference type="STRING" id="284811.Q754V0"/>
<dbReference type="EnsemblFungi" id="AAS53343">
    <property type="protein sequence ID" value="AAS53343"/>
    <property type="gene ID" value="AGOS_AFL029W"/>
</dbReference>
<dbReference type="GeneID" id="4621752"/>
<dbReference type="KEGG" id="ago:AGOS_AFL029W"/>
<dbReference type="eggNOG" id="ENOG502QUSW">
    <property type="taxonomic scope" value="Eukaryota"/>
</dbReference>
<dbReference type="HOGENOM" id="CLU_019840_0_0_1"/>
<dbReference type="InParanoid" id="Q754V0"/>
<dbReference type="OMA" id="EMKYGYL"/>
<dbReference type="OrthoDB" id="4081443at2759"/>
<dbReference type="Proteomes" id="UP000000591">
    <property type="component" value="Chromosome VI"/>
</dbReference>
<dbReference type="GO" id="GO:0005743">
    <property type="term" value="C:mitochondrial inner membrane"/>
    <property type="evidence" value="ECO:0007669"/>
    <property type="project" value="UniProtKB-SubCell"/>
</dbReference>
<dbReference type="GO" id="GO:0030435">
    <property type="term" value="P:sporulation resulting in formation of a cellular spore"/>
    <property type="evidence" value="ECO:0007669"/>
    <property type="project" value="UniProtKB-KW"/>
</dbReference>
<name>RMD9_EREGS</name>
<sequence length="667" mass="74874">MFRFVQQSQLRKAWVPNQLVSASRNSLHAQNSLRFNSAAAVERTAETVGGGANGYGGSGDAGAPLDRAVNKVRSMRRGFKLGKSFPKPPSPESPWYHKVCAFDEYVASSLNAGNETGSAGWAKSQRATMFWDSITKAMNLYRELLLSQELTQARVSRLLSLLHLALKINRSNMTGLNKKPDYDSQSFHKTMTNYLYASFKEISQDVLNGQVTVAHVGAFHLLESFRELLLAEEAVLLWRTATASEKPGLVAPFMHPDPVGIMLPLLHEGGMTFEEVSALYEKCKKGQNPTALHCLTLGMIKVCLSAGANAEAVGLFQEICSLPGNSVSKATLTGIHLAFIGECKDLQLATVFFNRALSGETPYKMNIHVSSVKQLLQNIWDQTEDFEQVFDVWRRASNYYVGLSSQGIFSSLNSKFFEIFFQKYRNDKVAGMQHLMEIITGYNEIRSVDEPFLNIILTKCVVWKDLEIIENIEESYQIYQLSKSIVSCRILLKAMGCVEVSNEQIYSRWLRLVQKADQIGQTYIANADWAALRDATVGYIHQNQKEEHADSPENLATSYPDYNPALEAANASGAFDSDLPFGEHGNAIKKHIIATDDRSELYFRMVKKFGQYCRDSKQLVRITRGITESYPFTKEYSDNFMSMDVSDIQMPKLVNLRSKSQLFASYF</sequence>
<evidence type="ECO:0000250" key="1">
    <source>
        <dbReference type="UniProtKB" id="P53140"/>
    </source>
</evidence>
<evidence type="ECO:0000255" key="2"/>
<evidence type="ECO:0000305" key="3"/>
<protein>
    <recommendedName>
        <fullName evidence="1">RNA-binding protein RMD9, mitochondrial</fullName>
    </recommendedName>
</protein>